<proteinExistence type="inferred from homology"/>
<accession>Q54I82</accession>
<gene>
    <name type="primary">cda</name>
    <name type="ORF">DDB_G0288933</name>
</gene>
<name>CDD_DICDI</name>
<keyword id="KW-0378">Hydrolase</keyword>
<keyword id="KW-0479">Metal-binding</keyword>
<keyword id="KW-1185">Reference proteome</keyword>
<keyword id="KW-0862">Zinc</keyword>
<sequence length="147" mass="16263">MNQEELEKCIDAAQNSQQYAHCPYSHFRIGAALLTSCGKIFTGVNVENSSYGLTICAERTAYTKAVSEGYKSFKGIVVASDLKDRFITPCGACRQFGVEFGDFEVVCVKPDRSTFKSSTHKLLPGLFSQEDLIAKAEQDERECKAQN</sequence>
<feature type="chain" id="PRO_0000328079" description="Probable cytidine deaminase">
    <location>
        <begin position="1"/>
        <end position="147"/>
    </location>
</feature>
<feature type="domain" description="CMP/dCMP-type deaminase" evidence="2">
    <location>
        <begin position="4"/>
        <end position="130"/>
    </location>
</feature>
<feature type="active site" description="Proton donor" evidence="1">
    <location>
        <position position="58"/>
    </location>
</feature>
<feature type="binding site" evidence="1">
    <location>
        <begin position="45"/>
        <end position="51"/>
    </location>
    <ligand>
        <name>substrate</name>
    </ligand>
</feature>
<feature type="binding site" evidence="1">
    <location>
        <position position="56"/>
    </location>
    <ligand>
        <name>Zn(2+)</name>
        <dbReference type="ChEBI" id="CHEBI:29105"/>
        <note>catalytic</note>
    </ligand>
</feature>
<feature type="binding site" evidence="1">
    <location>
        <position position="90"/>
    </location>
    <ligand>
        <name>Zn(2+)</name>
        <dbReference type="ChEBI" id="CHEBI:29105"/>
        <note>catalytic</note>
    </ligand>
</feature>
<feature type="binding site" evidence="1">
    <location>
        <position position="93"/>
    </location>
    <ligand>
        <name>Zn(2+)</name>
        <dbReference type="ChEBI" id="CHEBI:29105"/>
        <note>catalytic</note>
    </ligand>
</feature>
<evidence type="ECO:0000250" key="1"/>
<evidence type="ECO:0000255" key="2">
    <source>
        <dbReference type="PROSITE-ProRule" id="PRU01083"/>
    </source>
</evidence>
<evidence type="ECO:0000305" key="3"/>
<protein>
    <recommendedName>
        <fullName>Probable cytidine deaminase</fullName>
        <ecNumber>3.5.4.5</ecNumber>
    </recommendedName>
    <alternativeName>
        <fullName>Cytidine aminohydrolase</fullName>
    </alternativeName>
</protein>
<dbReference type="EC" id="3.5.4.5"/>
<dbReference type="EMBL" id="AAFI02000126">
    <property type="protein sequence ID" value="EAL62990.1"/>
    <property type="molecule type" value="Genomic_DNA"/>
</dbReference>
<dbReference type="RefSeq" id="XP_636497.1">
    <property type="nucleotide sequence ID" value="XM_631405.1"/>
</dbReference>
<dbReference type="SMR" id="Q54I82"/>
<dbReference type="FunCoup" id="Q54I82">
    <property type="interactions" value="44"/>
</dbReference>
<dbReference type="STRING" id="44689.Q54I82"/>
<dbReference type="PaxDb" id="44689-DDB0230205"/>
<dbReference type="EnsemblProtists" id="EAL62990">
    <property type="protein sequence ID" value="EAL62990"/>
    <property type="gene ID" value="DDB_G0288933"/>
</dbReference>
<dbReference type="GeneID" id="8626880"/>
<dbReference type="KEGG" id="ddi:DDB_G0288933"/>
<dbReference type="dictyBase" id="DDB_G0288933">
    <property type="gene designation" value="cda"/>
</dbReference>
<dbReference type="VEuPathDB" id="AmoebaDB:DDB_G0288933"/>
<dbReference type="eggNOG" id="KOG0833">
    <property type="taxonomic scope" value="Eukaryota"/>
</dbReference>
<dbReference type="HOGENOM" id="CLU_097262_1_2_1"/>
<dbReference type="InParanoid" id="Q54I82"/>
<dbReference type="OMA" id="RFITPCG"/>
<dbReference type="PhylomeDB" id="Q54I82"/>
<dbReference type="Reactome" id="R-DDI-6798695">
    <property type="pathway name" value="Neutrophil degranulation"/>
</dbReference>
<dbReference type="Reactome" id="R-DDI-73614">
    <property type="pathway name" value="Pyrimidine salvage"/>
</dbReference>
<dbReference type="PRO" id="PR:Q54I82"/>
<dbReference type="Proteomes" id="UP000002195">
    <property type="component" value="Chromosome 5"/>
</dbReference>
<dbReference type="GO" id="GO:0005737">
    <property type="term" value="C:cytoplasm"/>
    <property type="evidence" value="ECO:0000250"/>
    <property type="project" value="dictyBase"/>
</dbReference>
<dbReference type="GO" id="GO:0005829">
    <property type="term" value="C:cytosol"/>
    <property type="evidence" value="ECO:0000318"/>
    <property type="project" value="GO_Central"/>
</dbReference>
<dbReference type="GO" id="GO:0005634">
    <property type="term" value="C:nucleus"/>
    <property type="evidence" value="ECO:0000250"/>
    <property type="project" value="dictyBase"/>
</dbReference>
<dbReference type="GO" id="GO:0004126">
    <property type="term" value="F:cytidine deaminase activity"/>
    <property type="evidence" value="ECO:0000250"/>
    <property type="project" value="UniProtKB"/>
</dbReference>
<dbReference type="GO" id="GO:0008270">
    <property type="term" value="F:zinc ion binding"/>
    <property type="evidence" value="ECO:0000250"/>
    <property type="project" value="UniProtKB"/>
</dbReference>
<dbReference type="GO" id="GO:0006216">
    <property type="term" value="P:cytidine catabolic process"/>
    <property type="evidence" value="ECO:0000250"/>
    <property type="project" value="dictyBase"/>
</dbReference>
<dbReference type="GO" id="GO:0009972">
    <property type="term" value="P:cytidine deamination"/>
    <property type="evidence" value="ECO:0000250"/>
    <property type="project" value="UniProtKB"/>
</dbReference>
<dbReference type="GO" id="GO:0006217">
    <property type="term" value="P:deoxycytidine catabolic process"/>
    <property type="evidence" value="ECO:0000250"/>
    <property type="project" value="dictyBase"/>
</dbReference>
<dbReference type="GO" id="GO:0008655">
    <property type="term" value="P:pyrimidine-containing compound salvage"/>
    <property type="evidence" value="ECO:0000250"/>
    <property type="project" value="dictyBase"/>
</dbReference>
<dbReference type="CDD" id="cd01283">
    <property type="entry name" value="cytidine_deaminase"/>
    <property type="match status" value="1"/>
</dbReference>
<dbReference type="FunFam" id="3.40.140.10:FF:000008">
    <property type="entry name" value="Cytidine deaminase"/>
    <property type="match status" value="1"/>
</dbReference>
<dbReference type="Gene3D" id="3.40.140.10">
    <property type="entry name" value="Cytidine Deaminase, domain 2"/>
    <property type="match status" value="1"/>
</dbReference>
<dbReference type="InterPro" id="IPR002125">
    <property type="entry name" value="CMP_dCMP_dom"/>
</dbReference>
<dbReference type="InterPro" id="IPR050202">
    <property type="entry name" value="Cyt/Deoxycyt_deaminase"/>
</dbReference>
<dbReference type="InterPro" id="IPR006262">
    <property type="entry name" value="Cyt_deam_tetra"/>
</dbReference>
<dbReference type="InterPro" id="IPR016193">
    <property type="entry name" value="Cytidine_deaminase-like"/>
</dbReference>
<dbReference type="NCBIfam" id="TIGR01354">
    <property type="entry name" value="cyt_deam_tetra"/>
    <property type="match status" value="1"/>
</dbReference>
<dbReference type="NCBIfam" id="NF004064">
    <property type="entry name" value="PRK05578.1"/>
    <property type="match status" value="1"/>
</dbReference>
<dbReference type="PANTHER" id="PTHR11644">
    <property type="entry name" value="CYTIDINE DEAMINASE"/>
    <property type="match status" value="1"/>
</dbReference>
<dbReference type="PANTHER" id="PTHR11644:SF2">
    <property type="entry name" value="CYTIDINE DEAMINASE"/>
    <property type="match status" value="1"/>
</dbReference>
<dbReference type="Pfam" id="PF00383">
    <property type="entry name" value="dCMP_cyt_deam_1"/>
    <property type="match status" value="1"/>
</dbReference>
<dbReference type="SUPFAM" id="SSF53927">
    <property type="entry name" value="Cytidine deaminase-like"/>
    <property type="match status" value="1"/>
</dbReference>
<dbReference type="PROSITE" id="PS51747">
    <property type="entry name" value="CYT_DCMP_DEAMINASES_2"/>
    <property type="match status" value="1"/>
</dbReference>
<comment type="function">
    <text evidence="1">This enzyme scavenges exogenous and endogenous cytidine and 2'-deoxycytidine for UMP synthesis.</text>
</comment>
<comment type="catalytic activity">
    <reaction>
        <text>cytidine + H2O + H(+) = uridine + NH4(+)</text>
        <dbReference type="Rhea" id="RHEA:16069"/>
        <dbReference type="ChEBI" id="CHEBI:15377"/>
        <dbReference type="ChEBI" id="CHEBI:15378"/>
        <dbReference type="ChEBI" id="CHEBI:16704"/>
        <dbReference type="ChEBI" id="CHEBI:17562"/>
        <dbReference type="ChEBI" id="CHEBI:28938"/>
        <dbReference type="EC" id="3.5.4.5"/>
    </reaction>
</comment>
<comment type="catalytic activity">
    <reaction>
        <text>2'-deoxycytidine + H2O + H(+) = 2'-deoxyuridine + NH4(+)</text>
        <dbReference type="Rhea" id="RHEA:13433"/>
        <dbReference type="ChEBI" id="CHEBI:15377"/>
        <dbReference type="ChEBI" id="CHEBI:15378"/>
        <dbReference type="ChEBI" id="CHEBI:15698"/>
        <dbReference type="ChEBI" id="CHEBI:16450"/>
        <dbReference type="ChEBI" id="CHEBI:28938"/>
        <dbReference type="EC" id="3.5.4.5"/>
    </reaction>
</comment>
<comment type="cofactor">
    <cofactor evidence="1">
        <name>Zn(2+)</name>
        <dbReference type="ChEBI" id="CHEBI:29105"/>
    </cofactor>
</comment>
<comment type="similarity">
    <text evidence="3">Belongs to the cytidine and deoxycytidylate deaminase family.</text>
</comment>
<organism>
    <name type="scientific">Dictyostelium discoideum</name>
    <name type="common">Social amoeba</name>
    <dbReference type="NCBI Taxonomy" id="44689"/>
    <lineage>
        <taxon>Eukaryota</taxon>
        <taxon>Amoebozoa</taxon>
        <taxon>Evosea</taxon>
        <taxon>Eumycetozoa</taxon>
        <taxon>Dictyostelia</taxon>
        <taxon>Dictyosteliales</taxon>
        <taxon>Dictyosteliaceae</taxon>
        <taxon>Dictyostelium</taxon>
    </lineage>
</organism>
<reference key="1">
    <citation type="journal article" date="2005" name="Nature">
        <title>The genome of the social amoeba Dictyostelium discoideum.</title>
        <authorList>
            <person name="Eichinger L."/>
            <person name="Pachebat J.A."/>
            <person name="Gloeckner G."/>
            <person name="Rajandream M.A."/>
            <person name="Sucgang R."/>
            <person name="Berriman M."/>
            <person name="Song J."/>
            <person name="Olsen R."/>
            <person name="Szafranski K."/>
            <person name="Xu Q."/>
            <person name="Tunggal B."/>
            <person name="Kummerfeld S."/>
            <person name="Madera M."/>
            <person name="Konfortov B.A."/>
            <person name="Rivero F."/>
            <person name="Bankier A.T."/>
            <person name="Lehmann R."/>
            <person name="Hamlin N."/>
            <person name="Davies R."/>
            <person name="Gaudet P."/>
            <person name="Fey P."/>
            <person name="Pilcher K."/>
            <person name="Chen G."/>
            <person name="Saunders D."/>
            <person name="Sodergren E.J."/>
            <person name="Davis P."/>
            <person name="Kerhornou A."/>
            <person name="Nie X."/>
            <person name="Hall N."/>
            <person name="Anjard C."/>
            <person name="Hemphill L."/>
            <person name="Bason N."/>
            <person name="Farbrother P."/>
            <person name="Desany B."/>
            <person name="Just E."/>
            <person name="Morio T."/>
            <person name="Rost R."/>
            <person name="Churcher C.M."/>
            <person name="Cooper J."/>
            <person name="Haydock S."/>
            <person name="van Driessche N."/>
            <person name="Cronin A."/>
            <person name="Goodhead I."/>
            <person name="Muzny D.M."/>
            <person name="Mourier T."/>
            <person name="Pain A."/>
            <person name="Lu M."/>
            <person name="Harper D."/>
            <person name="Lindsay R."/>
            <person name="Hauser H."/>
            <person name="James K.D."/>
            <person name="Quiles M."/>
            <person name="Madan Babu M."/>
            <person name="Saito T."/>
            <person name="Buchrieser C."/>
            <person name="Wardroper A."/>
            <person name="Felder M."/>
            <person name="Thangavelu M."/>
            <person name="Johnson D."/>
            <person name="Knights A."/>
            <person name="Loulseged H."/>
            <person name="Mungall K.L."/>
            <person name="Oliver K."/>
            <person name="Price C."/>
            <person name="Quail M.A."/>
            <person name="Urushihara H."/>
            <person name="Hernandez J."/>
            <person name="Rabbinowitsch E."/>
            <person name="Steffen D."/>
            <person name="Sanders M."/>
            <person name="Ma J."/>
            <person name="Kohara Y."/>
            <person name="Sharp S."/>
            <person name="Simmonds M.N."/>
            <person name="Spiegler S."/>
            <person name="Tivey A."/>
            <person name="Sugano S."/>
            <person name="White B."/>
            <person name="Walker D."/>
            <person name="Woodward J.R."/>
            <person name="Winckler T."/>
            <person name="Tanaka Y."/>
            <person name="Shaulsky G."/>
            <person name="Schleicher M."/>
            <person name="Weinstock G.M."/>
            <person name="Rosenthal A."/>
            <person name="Cox E.C."/>
            <person name="Chisholm R.L."/>
            <person name="Gibbs R.A."/>
            <person name="Loomis W.F."/>
            <person name="Platzer M."/>
            <person name="Kay R.R."/>
            <person name="Williams J.G."/>
            <person name="Dear P.H."/>
            <person name="Noegel A.A."/>
            <person name="Barrell B.G."/>
            <person name="Kuspa A."/>
        </authorList>
    </citation>
    <scope>NUCLEOTIDE SEQUENCE [LARGE SCALE GENOMIC DNA]</scope>
    <source>
        <strain>AX4</strain>
    </source>
</reference>